<reference key="1">
    <citation type="journal article" date="1992" name="Proc. Natl. Acad. Sci. U.S.A.">
        <title>Diversification of the Wnt gene family on the ancestral lineage of vertebrates.</title>
        <authorList>
            <person name="Sidow A."/>
        </authorList>
    </citation>
    <scope>NUCLEOTIDE SEQUENCE [GENOMIC DNA]</scope>
</reference>
<gene>
    <name type="primary">WNT-8</name>
</gene>
<organism>
    <name type="scientific">Evasterias troschelii</name>
    <name type="common">Mottled sea star</name>
    <name type="synonym">Asterias troschelii</name>
    <dbReference type="NCBI Taxonomy" id="7616"/>
    <lineage>
        <taxon>Eukaryota</taxon>
        <taxon>Metazoa</taxon>
        <taxon>Echinodermata</taxon>
        <taxon>Eleutherozoa</taxon>
        <taxon>Asterozoa</taxon>
        <taxon>Asteroidea</taxon>
        <taxon>Forcipulatacea</taxon>
        <taxon>Forcipulatida</taxon>
        <taxon>Asteriidae</taxon>
        <taxon>Evasterias</taxon>
    </lineage>
</organism>
<name>WNT8_EVATR</name>
<evidence type="ECO:0000250" key="1">
    <source>
        <dbReference type="UniProtKB" id="P28026"/>
    </source>
</evidence>
<evidence type="ECO:0000250" key="2">
    <source>
        <dbReference type="UniProtKB" id="P56704"/>
    </source>
</evidence>
<evidence type="ECO:0000255" key="3"/>
<evidence type="ECO:0000305" key="4"/>
<sequence>SGSCSIQTCWDQLGAFDIIGEALRKRYETAVLVDYINGNLFPSEVKSKDASEPVDKSDLAFLELSPNYCQLNSTIGAVGTLGRECLRGRGVDEVSEWEARSCKRLCTSCGLGVKRTKVVVSSSCNCKF</sequence>
<comment type="function">
    <text>Ligand for members of the frizzled family of seven transmembrane receptors. Probable developmental protein. May be a signaling molecule which affects the development of discrete regions of tissues. Is likely to signal over only few cell diameters.</text>
</comment>
<comment type="subcellular location">
    <subcellularLocation>
        <location>Secreted</location>
        <location>Extracellular space</location>
        <location>Extracellular matrix</location>
    </subcellularLocation>
</comment>
<comment type="PTM">
    <text evidence="1 2">Palmitoleoylation is required for efficient binding to frizzled receptors (By similarity). Depalmitoleoylation leads to Wnt signaling pathway inhibition (By similarity).</text>
</comment>
<comment type="PTM">
    <text evidence="1">Proteolytic processing by tiki1 and tiki2 promotes oxidation and formation of large disulfide-bond oligomers, leading to inactivation of wnt8.</text>
</comment>
<comment type="similarity">
    <text evidence="4">Belongs to the Wnt family.</text>
</comment>
<keyword id="KW-0217">Developmental protein</keyword>
<keyword id="KW-1015">Disulfide bond</keyword>
<keyword id="KW-0272">Extracellular matrix</keyword>
<keyword id="KW-0325">Glycoprotein</keyword>
<keyword id="KW-0449">Lipoprotein</keyword>
<keyword id="KW-0964">Secreted</keyword>
<keyword id="KW-0879">Wnt signaling pathway</keyword>
<protein>
    <recommendedName>
        <fullName>Protein Wnt-8</fullName>
    </recommendedName>
</protein>
<dbReference type="EMBL" id="M91276">
    <property type="protein sequence ID" value="AAA29134.1"/>
    <property type="molecule type" value="Genomic_DNA"/>
</dbReference>
<dbReference type="SMR" id="P28093"/>
<dbReference type="GlyCosmos" id="P28093">
    <property type="glycosylation" value="1 site, No reported glycans"/>
</dbReference>
<dbReference type="GO" id="GO:0005615">
    <property type="term" value="C:extracellular space"/>
    <property type="evidence" value="ECO:0007669"/>
    <property type="project" value="TreeGrafter"/>
</dbReference>
<dbReference type="GO" id="GO:0005125">
    <property type="term" value="F:cytokine activity"/>
    <property type="evidence" value="ECO:0007669"/>
    <property type="project" value="TreeGrafter"/>
</dbReference>
<dbReference type="GO" id="GO:0005109">
    <property type="term" value="F:frizzled binding"/>
    <property type="evidence" value="ECO:0007669"/>
    <property type="project" value="TreeGrafter"/>
</dbReference>
<dbReference type="GO" id="GO:0060070">
    <property type="term" value="P:canonical Wnt signaling pathway"/>
    <property type="evidence" value="ECO:0007669"/>
    <property type="project" value="TreeGrafter"/>
</dbReference>
<dbReference type="GO" id="GO:0045165">
    <property type="term" value="P:cell fate commitment"/>
    <property type="evidence" value="ECO:0007669"/>
    <property type="project" value="TreeGrafter"/>
</dbReference>
<dbReference type="GO" id="GO:0030182">
    <property type="term" value="P:neuron differentiation"/>
    <property type="evidence" value="ECO:0007669"/>
    <property type="project" value="TreeGrafter"/>
</dbReference>
<dbReference type="Gene3D" id="3.30.2460.20">
    <property type="match status" value="1"/>
</dbReference>
<dbReference type="InterPro" id="IPR005817">
    <property type="entry name" value="Wnt"/>
</dbReference>
<dbReference type="InterPro" id="IPR043158">
    <property type="entry name" value="Wnt_C"/>
</dbReference>
<dbReference type="PANTHER" id="PTHR12027:SF81">
    <property type="entry name" value="WNT INHIBITOR OF DORSAL PROTEIN"/>
    <property type="match status" value="1"/>
</dbReference>
<dbReference type="PANTHER" id="PTHR12027">
    <property type="entry name" value="WNT RELATED"/>
    <property type="match status" value="1"/>
</dbReference>
<dbReference type="Pfam" id="PF00110">
    <property type="entry name" value="wnt"/>
    <property type="match status" value="1"/>
</dbReference>
<dbReference type="SMART" id="SM00097">
    <property type="entry name" value="WNT1"/>
    <property type="match status" value="1"/>
</dbReference>
<accession>P28093</accession>
<feature type="chain" id="PRO_0000200658" description="Protein Wnt-8">
    <location>
        <begin position="1" status="less than"/>
        <end position="128" status="greater than"/>
    </location>
</feature>
<feature type="lipid moiety-binding region" description="O-palmitoleoyl serine" evidence="1">
    <location>
        <position position="1"/>
    </location>
</feature>
<feature type="glycosylation site" description="N-linked (GlcNAc...) asparagine" evidence="3">
    <location>
        <position position="72"/>
    </location>
</feature>
<feature type="disulfide bond" evidence="1">
    <location>
        <begin position="69"/>
        <end position="109"/>
    </location>
</feature>
<feature type="disulfide bond" evidence="1">
    <location>
        <begin position="85"/>
        <end position="102"/>
    </location>
</feature>
<feature type="non-terminal residue">
    <location>
        <position position="1"/>
    </location>
</feature>
<feature type="non-terminal residue">
    <location>
        <position position="128"/>
    </location>
</feature>
<proteinExistence type="inferred from homology"/>